<comment type="function">
    <text evidence="1">Part of the ABC transporter complex MalEFGK involved in maltose/maltodextrin import. Responsible for energy coupling to the transport system.</text>
</comment>
<comment type="catalytic activity">
    <reaction evidence="1">
        <text>D-maltose(out) + ATP + H2O = D-maltose(in) + ADP + phosphate + H(+)</text>
        <dbReference type="Rhea" id="RHEA:22132"/>
        <dbReference type="ChEBI" id="CHEBI:15377"/>
        <dbReference type="ChEBI" id="CHEBI:15378"/>
        <dbReference type="ChEBI" id="CHEBI:17306"/>
        <dbReference type="ChEBI" id="CHEBI:30616"/>
        <dbReference type="ChEBI" id="CHEBI:43474"/>
        <dbReference type="ChEBI" id="CHEBI:456216"/>
        <dbReference type="EC" id="7.5.2.1"/>
    </reaction>
</comment>
<comment type="subunit">
    <text evidence="1">The complex is composed of two ATP-binding proteins (MalK), two transmembrane proteins (MalG and MalK) and a solute-binding protein (MalE).</text>
</comment>
<comment type="subcellular location">
    <subcellularLocation>
        <location evidence="1">Cell inner membrane</location>
        <topology evidence="1">Peripheral membrane protein</topology>
    </subcellularLocation>
</comment>
<comment type="similarity">
    <text evidence="1">Belongs to the ABC transporter superfamily. Maltooligosaccharide importer (TC 3.A.1.1.1) family.</text>
</comment>
<comment type="sequence caution" evidence="2">
    <conflict type="erroneous initiation">
        <sequence resource="EMBL-CDS" id="ABE10013"/>
    </conflict>
</comment>
<gene>
    <name evidence="1" type="primary">malK</name>
    <name type="ordered locus">UTI89_C4605</name>
</gene>
<protein>
    <recommendedName>
        <fullName evidence="1">Maltose/maltodextrin import ATP-binding protein MalK</fullName>
        <ecNumber evidence="1">7.5.2.1</ecNumber>
    </recommendedName>
</protein>
<dbReference type="EC" id="7.5.2.1" evidence="1"/>
<dbReference type="EMBL" id="CP000243">
    <property type="protein sequence ID" value="ABE10013.1"/>
    <property type="status" value="ALT_INIT"/>
    <property type="molecule type" value="Genomic_DNA"/>
</dbReference>
<dbReference type="RefSeq" id="WP_000179165.1">
    <property type="nucleotide sequence ID" value="NZ_CP064825.1"/>
</dbReference>
<dbReference type="PDB" id="2R6G">
    <property type="method" value="X-ray"/>
    <property type="resolution" value="2.80 A"/>
    <property type="chains" value="A/B=1-371"/>
</dbReference>
<dbReference type="PDBsum" id="2R6G"/>
<dbReference type="SMR" id="Q1R3Q1"/>
<dbReference type="GeneID" id="93777800"/>
<dbReference type="KEGG" id="eci:UTI89_C4605"/>
<dbReference type="HOGENOM" id="CLU_000604_1_1_6"/>
<dbReference type="Proteomes" id="UP000001952">
    <property type="component" value="Chromosome"/>
</dbReference>
<dbReference type="GO" id="GO:0055052">
    <property type="term" value="C:ATP-binding cassette (ABC) transporter complex, substrate-binding subunit-containing"/>
    <property type="evidence" value="ECO:0007669"/>
    <property type="project" value="TreeGrafter"/>
</dbReference>
<dbReference type="GO" id="GO:1990060">
    <property type="term" value="C:maltose transport complex"/>
    <property type="evidence" value="ECO:0007669"/>
    <property type="project" value="TreeGrafter"/>
</dbReference>
<dbReference type="GO" id="GO:0015423">
    <property type="term" value="F:ABC-type maltose transporter activity"/>
    <property type="evidence" value="ECO:0007669"/>
    <property type="project" value="UniProtKB-EC"/>
</dbReference>
<dbReference type="GO" id="GO:0005524">
    <property type="term" value="F:ATP binding"/>
    <property type="evidence" value="ECO:0007669"/>
    <property type="project" value="UniProtKB-KW"/>
</dbReference>
<dbReference type="GO" id="GO:0016887">
    <property type="term" value="F:ATP hydrolysis activity"/>
    <property type="evidence" value="ECO:0007669"/>
    <property type="project" value="InterPro"/>
</dbReference>
<dbReference type="CDD" id="cd03301">
    <property type="entry name" value="ABC_MalK_N"/>
    <property type="match status" value="1"/>
</dbReference>
<dbReference type="FunFam" id="3.40.50.300:FF:000042">
    <property type="entry name" value="Maltose/maltodextrin ABC transporter, ATP-binding protein"/>
    <property type="match status" value="1"/>
</dbReference>
<dbReference type="FunFam" id="2.40.50.100:FF:000014">
    <property type="entry name" value="Maltose/maltodextrin import ATP-binding protein MalK"/>
    <property type="match status" value="1"/>
</dbReference>
<dbReference type="FunFam" id="2.40.50.140:FF:000070">
    <property type="entry name" value="Maltose/maltodextrin import ATP-binding protein MalK"/>
    <property type="match status" value="1"/>
</dbReference>
<dbReference type="Gene3D" id="2.40.50.100">
    <property type="match status" value="1"/>
</dbReference>
<dbReference type="Gene3D" id="2.40.50.140">
    <property type="entry name" value="Nucleic acid-binding proteins"/>
    <property type="match status" value="1"/>
</dbReference>
<dbReference type="Gene3D" id="3.40.50.300">
    <property type="entry name" value="P-loop containing nucleotide triphosphate hydrolases"/>
    <property type="match status" value="1"/>
</dbReference>
<dbReference type="InterPro" id="IPR003593">
    <property type="entry name" value="AAA+_ATPase"/>
</dbReference>
<dbReference type="InterPro" id="IPR003439">
    <property type="entry name" value="ABC_transporter-like_ATP-bd"/>
</dbReference>
<dbReference type="InterPro" id="IPR017871">
    <property type="entry name" value="ABC_transporter-like_CS"/>
</dbReference>
<dbReference type="InterPro" id="IPR015855">
    <property type="entry name" value="ABC_transpr_MalK-like"/>
</dbReference>
<dbReference type="InterPro" id="IPR047641">
    <property type="entry name" value="ABC_transpr_MalK/UgpC-like"/>
</dbReference>
<dbReference type="InterPro" id="IPR008995">
    <property type="entry name" value="Mo/tungstate-bd_C_term_dom"/>
</dbReference>
<dbReference type="InterPro" id="IPR012340">
    <property type="entry name" value="NA-bd_OB-fold"/>
</dbReference>
<dbReference type="InterPro" id="IPR027417">
    <property type="entry name" value="P-loop_NTPase"/>
</dbReference>
<dbReference type="InterPro" id="IPR013611">
    <property type="entry name" value="Transp-assoc_OB_typ2"/>
</dbReference>
<dbReference type="NCBIfam" id="NF008233">
    <property type="entry name" value="PRK11000.1"/>
    <property type="match status" value="1"/>
</dbReference>
<dbReference type="NCBIfam" id="NF008653">
    <property type="entry name" value="PRK11650.1"/>
    <property type="match status" value="1"/>
</dbReference>
<dbReference type="PANTHER" id="PTHR43875">
    <property type="entry name" value="MALTODEXTRIN IMPORT ATP-BINDING PROTEIN MSMX"/>
    <property type="match status" value="1"/>
</dbReference>
<dbReference type="PANTHER" id="PTHR43875:SF3">
    <property type="entry name" value="MALTOSE_MALTODEXTRIN IMPORT ATP-BINDING PROTEIN MALK"/>
    <property type="match status" value="1"/>
</dbReference>
<dbReference type="Pfam" id="PF00005">
    <property type="entry name" value="ABC_tran"/>
    <property type="match status" value="1"/>
</dbReference>
<dbReference type="Pfam" id="PF08402">
    <property type="entry name" value="TOBE_2"/>
    <property type="match status" value="1"/>
</dbReference>
<dbReference type="SMART" id="SM00382">
    <property type="entry name" value="AAA"/>
    <property type="match status" value="1"/>
</dbReference>
<dbReference type="SUPFAM" id="SSF50331">
    <property type="entry name" value="MOP-like"/>
    <property type="match status" value="1"/>
</dbReference>
<dbReference type="SUPFAM" id="SSF52540">
    <property type="entry name" value="P-loop containing nucleoside triphosphate hydrolases"/>
    <property type="match status" value="1"/>
</dbReference>
<dbReference type="PROSITE" id="PS00211">
    <property type="entry name" value="ABC_TRANSPORTER_1"/>
    <property type="match status" value="1"/>
</dbReference>
<dbReference type="PROSITE" id="PS50893">
    <property type="entry name" value="ABC_TRANSPORTER_2"/>
    <property type="match status" value="1"/>
</dbReference>
<dbReference type="PROSITE" id="PS51245">
    <property type="entry name" value="MALK"/>
    <property type="match status" value="1"/>
</dbReference>
<sequence length="371" mass="40990">MASVQLQNVTKAWGEVVVSKDINLDIHEGEFVVFVGPSGCGKSTLLRMIAGLETITSGDLFIGEKRMNDTPPAERGVGMVFQSYALYPHLSVAENMSFGLKLAGAKKEVINQRVNQVAEVLQLAHLLDRKPKALSGGQRQRVAIGRTLVAEPSVFLLDEPLSNLDAALRVQMRIEISRLHKRLGRTMIYVTHDQVEAMTLADKIVVLDAGRVAQVGKPLELYHYPADRFVAGFIGSPKMNFLPVKVTATAIDQVQVELPMPNRQQVWLPVESRDVQVGANMSLGIRPEHLLPSDIADVILEGEVQVVEQLGNETQIHIQIPSIRQNLVYRQNDVVLVEEGATFAIGLPPERCHLFREDGTACRRLHKEPGV</sequence>
<organism>
    <name type="scientific">Escherichia coli (strain UTI89 / UPEC)</name>
    <dbReference type="NCBI Taxonomy" id="364106"/>
    <lineage>
        <taxon>Bacteria</taxon>
        <taxon>Pseudomonadati</taxon>
        <taxon>Pseudomonadota</taxon>
        <taxon>Gammaproteobacteria</taxon>
        <taxon>Enterobacterales</taxon>
        <taxon>Enterobacteriaceae</taxon>
        <taxon>Escherichia</taxon>
    </lineage>
</organism>
<reference key="1">
    <citation type="journal article" date="2006" name="Proc. Natl. Acad. Sci. U.S.A.">
        <title>Identification of genes subject to positive selection in uropathogenic strains of Escherichia coli: a comparative genomics approach.</title>
        <authorList>
            <person name="Chen S.L."/>
            <person name="Hung C.-S."/>
            <person name="Xu J."/>
            <person name="Reigstad C.S."/>
            <person name="Magrini V."/>
            <person name="Sabo A."/>
            <person name="Blasiar D."/>
            <person name="Bieri T."/>
            <person name="Meyer R.R."/>
            <person name="Ozersky P."/>
            <person name="Armstrong J.R."/>
            <person name="Fulton R.S."/>
            <person name="Latreille J.P."/>
            <person name="Spieth J."/>
            <person name="Hooton T.M."/>
            <person name="Mardis E.R."/>
            <person name="Hultgren S.J."/>
            <person name="Gordon J.I."/>
        </authorList>
    </citation>
    <scope>NUCLEOTIDE SEQUENCE [LARGE SCALE GENOMIC DNA]</scope>
    <source>
        <strain>UTI89 / UPEC</strain>
    </source>
</reference>
<name>MALK_ECOUT</name>
<feature type="chain" id="PRO_0000273993" description="Maltose/maltodextrin import ATP-binding protein MalK">
    <location>
        <begin position="1"/>
        <end position="371"/>
    </location>
</feature>
<feature type="domain" description="ABC transporter" evidence="1">
    <location>
        <begin position="4"/>
        <end position="234"/>
    </location>
</feature>
<feature type="binding site" evidence="1">
    <location>
        <begin position="36"/>
        <end position="43"/>
    </location>
    <ligand>
        <name>ATP</name>
        <dbReference type="ChEBI" id="CHEBI:30616"/>
    </ligand>
</feature>
<evidence type="ECO:0000255" key="1">
    <source>
        <dbReference type="HAMAP-Rule" id="MF_01709"/>
    </source>
</evidence>
<evidence type="ECO:0000305" key="2"/>
<accession>Q1R3Q1</accession>
<proteinExistence type="evidence at protein level"/>
<keyword id="KW-0002">3D-structure</keyword>
<keyword id="KW-0067">ATP-binding</keyword>
<keyword id="KW-0997">Cell inner membrane</keyword>
<keyword id="KW-1003">Cell membrane</keyword>
<keyword id="KW-0472">Membrane</keyword>
<keyword id="KW-0547">Nucleotide-binding</keyword>
<keyword id="KW-0762">Sugar transport</keyword>
<keyword id="KW-1278">Translocase</keyword>
<keyword id="KW-0813">Transport</keyword>